<evidence type="ECO:0000255" key="1">
    <source>
        <dbReference type="HAMAP-Rule" id="MF_00242"/>
    </source>
</evidence>
<feature type="chain" id="PRO_1000100753" description="Arginine deiminase">
    <location>
        <begin position="1"/>
        <end position="406"/>
    </location>
</feature>
<feature type="active site" description="Amidino-cysteine intermediate" evidence="1">
    <location>
        <position position="396"/>
    </location>
</feature>
<reference key="1">
    <citation type="submission" date="2008-08" db="EMBL/GenBank/DDBJ databases">
        <title>Complete sequence of Vibrio fischeri strain MJ11.</title>
        <authorList>
            <person name="Mandel M.J."/>
            <person name="Stabb E.V."/>
            <person name="Ruby E.G."/>
            <person name="Ferriera S."/>
            <person name="Johnson J."/>
            <person name="Kravitz S."/>
            <person name="Beeson K."/>
            <person name="Sutton G."/>
            <person name="Rogers Y.-H."/>
            <person name="Friedman R."/>
            <person name="Frazier M."/>
            <person name="Venter J.C."/>
        </authorList>
    </citation>
    <scope>NUCLEOTIDE SEQUENCE [LARGE SCALE GENOMIC DNA]</scope>
    <source>
        <strain>MJ11</strain>
    </source>
</reference>
<proteinExistence type="inferred from homology"/>
<dbReference type="EC" id="3.5.3.6" evidence="1"/>
<dbReference type="EMBL" id="CP001139">
    <property type="protein sequence ID" value="ACH65298.1"/>
    <property type="molecule type" value="Genomic_DNA"/>
</dbReference>
<dbReference type="RefSeq" id="WP_012532958.1">
    <property type="nucleotide sequence ID" value="NC_011184.1"/>
</dbReference>
<dbReference type="SMR" id="B5F9Q1"/>
<dbReference type="KEGG" id="vfm:VFMJ11_0398"/>
<dbReference type="HOGENOM" id="CLU_052662_0_0_6"/>
<dbReference type="UniPathway" id="UPA00254">
    <property type="reaction ID" value="UER00364"/>
</dbReference>
<dbReference type="Proteomes" id="UP000001857">
    <property type="component" value="Chromosome I"/>
</dbReference>
<dbReference type="GO" id="GO:0005737">
    <property type="term" value="C:cytoplasm"/>
    <property type="evidence" value="ECO:0007669"/>
    <property type="project" value="UniProtKB-SubCell"/>
</dbReference>
<dbReference type="GO" id="GO:0016990">
    <property type="term" value="F:arginine deiminase activity"/>
    <property type="evidence" value="ECO:0007669"/>
    <property type="project" value="UniProtKB-UniRule"/>
</dbReference>
<dbReference type="GO" id="GO:0019547">
    <property type="term" value="P:arginine catabolic process to ornithine"/>
    <property type="evidence" value="ECO:0007669"/>
    <property type="project" value="UniProtKB-UniRule"/>
</dbReference>
<dbReference type="GO" id="GO:0019546">
    <property type="term" value="P:arginine deiminase pathway"/>
    <property type="evidence" value="ECO:0007669"/>
    <property type="project" value="TreeGrafter"/>
</dbReference>
<dbReference type="FunFam" id="1.10.3930.10:FF:000002">
    <property type="entry name" value="Arginine deiminase"/>
    <property type="match status" value="1"/>
</dbReference>
<dbReference type="Gene3D" id="1.10.3930.10">
    <property type="entry name" value="Arginine deiminase"/>
    <property type="match status" value="1"/>
</dbReference>
<dbReference type="Gene3D" id="3.75.10.10">
    <property type="entry name" value="L-arginine/glycine Amidinotransferase, Chain A"/>
    <property type="match status" value="1"/>
</dbReference>
<dbReference type="HAMAP" id="MF_00242">
    <property type="entry name" value="Arg_deiminase"/>
    <property type="match status" value="1"/>
</dbReference>
<dbReference type="InterPro" id="IPR003876">
    <property type="entry name" value="Arg_deiminase"/>
</dbReference>
<dbReference type="NCBIfam" id="TIGR01078">
    <property type="entry name" value="arcA"/>
    <property type="match status" value="1"/>
</dbReference>
<dbReference type="NCBIfam" id="NF002381">
    <property type="entry name" value="PRK01388.1"/>
    <property type="match status" value="1"/>
</dbReference>
<dbReference type="PANTHER" id="PTHR47271">
    <property type="entry name" value="ARGININE DEIMINASE"/>
    <property type="match status" value="1"/>
</dbReference>
<dbReference type="PANTHER" id="PTHR47271:SF2">
    <property type="entry name" value="ARGININE DEIMINASE"/>
    <property type="match status" value="1"/>
</dbReference>
<dbReference type="Pfam" id="PF02274">
    <property type="entry name" value="ADI"/>
    <property type="match status" value="1"/>
</dbReference>
<dbReference type="PIRSF" id="PIRSF006356">
    <property type="entry name" value="Arg_deiminase"/>
    <property type="match status" value="1"/>
</dbReference>
<dbReference type="PRINTS" id="PR01466">
    <property type="entry name" value="ARGDEIMINASE"/>
</dbReference>
<dbReference type="SUPFAM" id="SSF55909">
    <property type="entry name" value="Pentein"/>
    <property type="match status" value="1"/>
</dbReference>
<protein>
    <recommendedName>
        <fullName evidence="1">Arginine deiminase</fullName>
        <shortName evidence="1">ADI</shortName>
        <ecNumber evidence="1">3.5.3.6</ecNumber>
    </recommendedName>
    <alternativeName>
        <fullName evidence="1">Arginine dihydrolase</fullName>
        <shortName evidence="1">AD</shortName>
    </alternativeName>
</protein>
<keyword id="KW-0056">Arginine metabolism</keyword>
<keyword id="KW-0963">Cytoplasm</keyword>
<keyword id="KW-0378">Hydrolase</keyword>
<organism>
    <name type="scientific">Aliivibrio fischeri (strain MJ11)</name>
    <name type="common">Vibrio fischeri</name>
    <dbReference type="NCBI Taxonomy" id="388396"/>
    <lineage>
        <taxon>Bacteria</taxon>
        <taxon>Pseudomonadati</taxon>
        <taxon>Pseudomonadota</taxon>
        <taxon>Gammaproteobacteria</taxon>
        <taxon>Vibrionales</taxon>
        <taxon>Vibrionaceae</taxon>
        <taxon>Aliivibrio</taxon>
    </lineage>
</organism>
<gene>
    <name evidence="1" type="primary">arcA</name>
    <name type="ordered locus">VFMJ11_0398</name>
</gene>
<comment type="catalytic activity">
    <reaction evidence="1">
        <text>L-arginine + H2O = L-citrulline + NH4(+)</text>
        <dbReference type="Rhea" id="RHEA:19597"/>
        <dbReference type="ChEBI" id="CHEBI:15377"/>
        <dbReference type="ChEBI" id="CHEBI:28938"/>
        <dbReference type="ChEBI" id="CHEBI:32682"/>
        <dbReference type="ChEBI" id="CHEBI:57743"/>
        <dbReference type="EC" id="3.5.3.6"/>
    </reaction>
</comment>
<comment type="pathway">
    <text evidence="1">Amino-acid degradation; L-arginine degradation via ADI pathway; carbamoyl phosphate from L-arginine: step 1/2.</text>
</comment>
<comment type="subcellular location">
    <subcellularLocation>
        <location evidence="1">Cytoplasm</location>
    </subcellularLocation>
</comment>
<comment type="similarity">
    <text evidence="1">Belongs to the arginine deiminase family.</text>
</comment>
<sequence>MNKLFVGSEIGQLRRVILHRPERALSHLTPTNCHNLLFDDVLSVEKALLEHDQFVKTLENQGVDVLLLQDLLEQTLENPEAKEWLLKHQISHYRFGPTFANQIRSFLLEHSNKELASILLGGLAFIELPFKAPSMLQQLSDPFDFVIDPLPNHLFTRDTSCWIYGGVSINPMAKAARKRESNHLRAIYRWHPLFSNQDFARYFEDENRYYDNATIEGGDVLVIGKGNVLVGISERTTPQGIENLAKQLFRTHQAKQVIAIKLPEDRSCMHLDTVMTHMDHNVFSVYPRVIDKNMGCWSITPCGEQHLDIKEMPNFQNVLMSALELDNLNIITTGGDSYEAEREQWHDANNVLTIKPGVVVAYERNTYTNEKYDKAGIHVLPITGDELGRGRGGARCMSCPIERDGI</sequence>
<name>ARCA_ALIFM</name>
<accession>B5F9Q1</accession>